<name>PP198_ARATH</name>
<gene>
    <name type="primary">PCMP-H29</name>
    <name type="ordered locus">At2g41080</name>
    <name type="ORF">T3K9.15</name>
</gene>
<dbReference type="EMBL" id="AC004261">
    <property type="protein sequence ID" value="AAD12003.1"/>
    <property type="status" value="ALT_INIT"/>
    <property type="molecule type" value="Genomic_DNA"/>
</dbReference>
<dbReference type="EMBL" id="CP002685">
    <property type="protein sequence ID" value="AEC09925.2"/>
    <property type="molecule type" value="Genomic_DNA"/>
</dbReference>
<dbReference type="EMBL" id="AY074642">
    <property type="protein sequence ID" value="AAL69458.1"/>
    <property type="status" value="ALT_INIT"/>
    <property type="molecule type" value="mRNA"/>
</dbReference>
<dbReference type="PIR" id="T02111">
    <property type="entry name" value="T02111"/>
</dbReference>
<dbReference type="RefSeq" id="NP_850342.2">
    <property type="nucleotide sequence ID" value="NM_180011.2"/>
</dbReference>
<dbReference type="SMR" id="Q8S9M4"/>
<dbReference type="FunCoup" id="Q8S9M4">
    <property type="interactions" value="977"/>
</dbReference>
<dbReference type="PaxDb" id="3702-AT2G41080.1"/>
<dbReference type="ProteomicsDB" id="249159"/>
<dbReference type="EnsemblPlants" id="AT2G41080.1">
    <property type="protein sequence ID" value="AT2G41080.1"/>
    <property type="gene ID" value="AT2G41080"/>
</dbReference>
<dbReference type="GeneID" id="818707"/>
<dbReference type="Gramene" id="AT2G41080.1">
    <property type="protein sequence ID" value="AT2G41080.1"/>
    <property type="gene ID" value="AT2G41080"/>
</dbReference>
<dbReference type="KEGG" id="ath:AT2G41080"/>
<dbReference type="Araport" id="AT2G41080"/>
<dbReference type="TAIR" id="AT2G41080"/>
<dbReference type="eggNOG" id="KOG4197">
    <property type="taxonomic scope" value="Eukaryota"/>
</dbReference>
<dbReference type="HOGENOM" id="CLU_002706_37_8_1"/>
<dbReference type="InParanoid" id="Q8S9M4"/>
<dbReference type="OMA" id="WQDVSEV"/>
<dbReference type="OrthoDB" id="1700852at2759"/>
<dbReference type="PhylomeDB" id="Q8S9M4"/>
<dbReference type="PRO" id="PR:Q8S9M4"/>
<dbReference type="Proteomes" id="UP000006548">
    <property type="component" value="Chromosome 2"/>
</dbReference>
<dbReference type="ExpressionAtlas" id="Q8S9M4">
    <property type="expression patterns" value="baseline and differential"/>
</dbReference>
<dbReference type="GO" id="GO:0003723">
    <property type="term" value="F:RNA binding"/>
    <property type="evidence" value="ECO:0007669"/>
    <property type="project" value="InterPro"/>
</dbReference>
<dbReference type="GO" id="GO:0008270">
    <property type="term" value="F:zinc ion binding"/>
    <property type="evidence" value="ECO:0007669"/>
    <property type="project" value="InterPro"/>
</dbReference>
<dbReference type="GO" id="GO:0009451">
    <property type="term" value="P:RNA modification"/>
    <property type="evidence" value="ECO:0007669"/>
    <property type="project" value="InterPro"/>
</dbReference>
<dbReference type="FunFam" id="1.25.40.10:FF:000442">
    <property type="entry name" value="Pentatricopeptide repeat-containing protein At3g49710"/>
    <property type="match status" value="1"/>
</dbReference>
<dbReference type="FunFam" id="1.25.40.10:FF:000325">
    <property type="entry name" value="Pentatricopeptide repeat-containing protein At4g14820"/>
    <property type="match status" value="1"/>
</dbReference>
<dbReference type="FunFam" id="1.25.40.10:FF:000073">
    <property type="entry name" value="Pentatricopeptide repeat-containing protein chloroplastic"/>
    <property type="match status" value="1"/>
</dbReference>
<dbReference type="Gene3D" id="1.25.40.10">
    <property type="entry name" value="Tetratricopeptide repeat domain"/>
    <property type="match status" value="4"/>
</dbReference>
<dbReference type="InterPro" id="IPR032867">
    <property type="entry name" value="DYW_dom"/>
</dbReference>
<dbReference type="InterPro" id="IPR046848">
    <property type="entry name" value="E_motif"/>
</dbReference>
<dbReference type="InterPro" id="IPR002885">
    <property type="entry name" value="Pentatricopeptide_rpt"/>
</dbReference>
<dbReference type="InterPro" id="IPR046960">
    <property type="entry name" value="PPR_At4g14850-like_plant"/>
</dbReference>
<dbReference type="InterPro" id="IPR011990">
    <property type="entry name" value="TPR-like_helical_dom_sf"/>
</dbReference>
<dbReference type="NCBIfam" id="TIGR00756">
    <property type="entry name" value="PPR"/>
    <property type="match status" value="5"/>
</dbReference>
<dbReference type="PANTHER" id="PTHR47926:SF409">
    <property type="entry name" value="DYW DOMAIN-CONTAINING PROTEIN"/>
    <property type="match status" value="1"/>
</dbReference>
<dbReference type="PANTHER" id="PTHR47926">
    <property type="entry name" value="PENTATRICOPEPTIDE REPEAT-CONTAINING PROTEIN"/>
    <property type="match status" value="1"/>
</dbReference>
<dbReference type="Pfam" id="PF14432">
    <property type="entry name" value="DYW_deaminase"/>
    <property type="match status" value="1"/>
</dbReference>
<dbReference type="Pfam" id="PF20431">
    <property type="entry name" value="E_motif"/>
    <property type="match status" value="1"/>
</dbReference>
<dbReference type="Pfam" id="PF01535">
    <property type="entry name" value="PPR"/>
    <property type="match status" value="7"/>
</dbReference>
<dbReference type="Pfam" id="PF13041">
    <property type="entry name" value="PPR_2"/>
    <property type="match status" value="1"/>
</dbReference>
<dbReference type="SUPFAM" id="SSF48452">
    <property type="entry name" value="TPR-like"/>
    <property type="match status" value="1"/>
</dbReference>
<dbReference type="PROSITE" id="PS51375">
    <property type="entry name" value="PPR"/>
    <property type="match status" value="13"/>
</dbReference>
<comment type="similarity">
    <text evidence="1">Belongs to the PPR family. PCMP-H subfamily.</text>
</comment>
<comment type="sequence caution" evidence="1">
    <conflict type="erroneous initiation">
        <sequence resource="EMBL-CDS" id="AAD12003"/>
    </conflict>
    <text>Truncated N-terminus.</text>
</comment>
<comment type="sequence caution" evidence="1">
    <conflict type="erroneous initiation">
        <sequence resource="EMBL-CDS" id="AAL69458"/>
    </conflict>
    <text>Truncated N-terminus.</text>
</comment>
<comment type="online information" name="Pentatricopeptide repeat proteins">
    <link uri="https://ppr.plantenergy.uwa.edu.au"/>
</comment>
<sequence length="650" mass="72816">MRCSVSSVVRPLSVDPATAIATLCSKGNLREAFQRFRLNIFTNTSLFTPFIQSCTTRQSLPSGKQLHCLLVVSGFSSDKFICNHLMSMYSKLGDFPSAVAVYGRMRKKNYMSSNILINGYVRAGDLVNARKVFDEMPDRKLTTWNAMIAGLIQFEFNEEGLSLFREMHGLGFSPDEYTLGSVFSGSAGLRSVSIGQQIHGYTIKYGLELDLVVNSSLAHMYMRNGKLQDGEIVIRSMPVRNLVAWNTLIMGNAQNGCPETVLYLYKMMKISGCRPNKITFVTVLSSCSDLAIRGQGQQIHAEAIKIGASSVVAVVSSLISMYSKCGCLGDAAKAFSEREDEDEVMWSSMISAYGFHGQGDEAIELFNTMAEQTNMEINEVAFLNLLYACSHSGLKDKGLELFDMMVEKYGFKPGLKHYTCVVDLLGRAGCLDQAEAIIRSMPIKTDIVIWKTLLSACNIHKNAEMAQRVFKEILQIDPNDSACYVLLANVHASAKRWRDVSEVRKSMRDKNVKKEAGISWFEHKGEVHQFKMGDRSQSKSKEIYSYLKELTLEMKLKGYKPDTASVLHDMDEEEKESDLVQHSEKLAVAFALMILPEGAPIRIIKNLRVCSDCHVAFKYISVIKNREITLRDGSRFHHFINGKCSCGDYW</sequence>
<accession>Q8S9M4</accession>
<accession>F4IJ39</accession>
<accession>O80676</accession>
<protein>
    <recommendedName>
        <fullName>Pentatricopeptide repeat-containing protein At2g41080</fullName>
    </recommendedName>
</protein>
<reference key="1">
    <citation type="journal article" date="1999" name="Nature">
        <title>Sequence and analysis of chromosome 2 of the plant Arabidopsis thaliana.</title>
        <authorList>
            <person name="Lin X."/>
            <person name="Kaul S."/>
            <person name="Rounsley S.D."/>
            <person name="Shea T.P."/>
            <person name="Benito M.-I."/>
            <person name="Town C.D."/>
            <person name="Fujii C.Y."/>
            <person name="Mason T.M."/>
            <person name="Bowman C.L."/>
            <person name="Barnstead M.E."/>
            <person name="Feldblyum T.V."/>
            <person name="Buell C.R."/>
            <person name="Ketchum K.A."/>
            <person name="Lee J.J."/>
            <person name="Ronning C.M."/>
            <person name="Koo H.L."/>
            <person name="Moffat K.S."/>
            <person name="Cronin L.A."/>
            <person name="Shen M."/>
            <person name="Pai G."/>
            <person name="Van Aken S."/>
            <person name="Umayam L."/>
            <person name="Tallon L.J."/>
            <person name="Gill J.E."/>
            <person name="Adams M.D."/>
            <person name="Carrera A.J."/>
            <person name="Creasy T.H."/>
            <person name="Goodman H.M."/>
            <person name="Somerville C.R."/>
            <person name="Copenhaver G.P."/>
            <person name="Preuss D."/>
            <person name="Nierman W.C."/>
            <person name="White O."/>
            <person name="Eisen J.A."/>
            <person name="Salzberg S.L."/>
            <person name="Fraser C.M."/>
            <person name="Venter J.C."/>
        </authorList>
    </citation>
    <scope>NUCLEOTIDE SEQUENCE [LARGE SCALE GENOMIC DNA]</scope>
    <source>
        <strain>cv. Columbia</strain>
    </source>
</reference>
<reference key="2">
    <citation type="journal article" date="2017" name="Plant J.">
        <title>Araport11: a complete reannotation of the Arabidopsis thaliana reference genome.</title>
        <authorList>
            <person name="Cheng C.Y."/>
            <person name="Krishnakumar V."/>
            <person name="Chan A.P."/>
            <person name="Thibaud-Nissen F."/>
            <person name="Schobel S."/>
            <person name="Town C.D."/>
        </authorList>
    </citation>
    <scope>GENOME REANNOTATION</scope>
    <source>
        <strain>cv. Columbia</strain>
    </source>
</reference>
<reference key="3">
    <citation type="journal article" date="2003" name="Science">
        <title>Empirical analysis of transcriptional activity in the Arabidopsis genome.</title>
        <authorList>
            <person name="Yamada K."/>
            <person name="Lim J."/>
            <person name="Dale J.M."/>
            <person name="Chen H."/>
            <person name="Shinn P."/>
            <person name="Palm C.J."/>
            <person name="Southwick A.M."/>
            <person name="Wu H.C."/>
            <person name="Kim C.J."/>
            <person name="Nguyen M."/>
            <person name="Pham P.K."/>
            <person name="Cheuk R.F."/>
            <person name="Karlin-Newmann G."/>
            <person name="Liu S.X."/>
            <person name="Lam B."/>
            <person name="Sakano H."/>
            <person name="Wu T."/>
            <person name="Yu G."/>
            <person name="Miranda M."/>
            <person name="Quach H.L."/>
            <person name="Tripp M."/>
            <person name="Chang C.H."/>
            <person name="Lee J.M."/>
            <person name="Toriumi M.J."/>
            <person name="Chan M.M."/>
            <person name="Tang C.C."/>
            <person name="Onodera C.S."/>
            <person name="Deng J.M."/>
            <person name="Akiyama K."/>
            <person name="Ansari Y."/>
            <person name="Arakawa T."/>
            <person name="Banh J."/>
            <person name="Banno F."/>
            <person name="Bowser L."/>
            <person name="Brooks S.Y."/>
            <person name="Carninci P."/>
            <person name="Chao Q."/>
            <person name="Choy N."/>
            <person name="Enju A."/>
            <person name="Goldsmith A.D."/>
            <person name="Gurjal M."/>
            <person name="Hansen N.F."/>
            <person name="Hayashizaki Y."/>
            <person name="Johnson-Hopson C."/>
            <person name="Hsuan V.W."/>
            <person name="Iida K."/>
            <person name="Karnes M."/>
            <person name="Khan S."/>
            <person name="Koesema E."/>
            <person name="Ishida J."/>
            <person name="Jiang P.X."/>
            <person name="Jones T."/>
            <person name="Kawai J."/>
            <person name="Kamiya A."/>
            <person name="Meyers C."/>
            <person name="Nakajima M."/>
            <person name="Narusaka M."/>
            <person name="Seki M."/>
            <person name="Sakurai T."/>
            <person name="Satou M."/>
            <person name="Tamse R."/>
            <person name="Vaysberg M."/>
            <person name="Wallender E.K."/>
            <person name="Wong C."/>
            <person name="Yamamura Y."/>
            <person name="Yuan S."/>
            <person name="Shinozaki K."/>
            <person name="Davis R.W."/>
            <person name="Theologis A."/>
            <person name="Ecker J.R."/>
        </authorList>
    </citation>
    <scope>NUCLEOTIDE SEQUENCE [LARGE SCALE MRNA] OF 85-650</scope>
    <source>
        <strain>cv. Columbia</strain>
    </source>
</reference>
<reference key="4">
    <citation type="journal article" date="2000" name="Plant Mol. Biol.">
        <title>In Arabidopsis thaliana, 1% of the genome codes for a novel protein family unique to plants.</title>
        <authorList>
            <person name="Aubourg S."/>
            <person name="Boudet N."/>
            <person name="Kreis M."/>
            <person name="Lecharny A."/>
        </authorList>
    </citation>
    <scope>GENE FAMILY</scope>
</reference>
<reference key="5">
    <citation type="journal article" date="2004" name="Plant Cell">
        <title>Genome-wide analysis of Arabidopsis pentatricopeptide repeat proteins reveals their essential role in organelle biogenesis.</title>
        <authorList>
            <person name="Lurin C."/>
            <person name="Andres C."/>
            <person name="Aubourg S."/>
            <person name="Bellaoui M."/>
            <person name="Bitton F."/>
            <person name="Bruyere C."/>
            <person name="Caboche M."/>
            <person name="Debast C."/>
            <person name="Gualberto J."/>
            <person name="Hoffmann B."/>
            <person name="Lecharny A."/>
            <person name="Le Ret M."/>
            <person name="Martin-Magniette M.-L."/>
            <person name="Mireau H."/>
            <person name="Peeters N."/>
            <person name="Renou J.-P."/>
            <person name="Szurek B."/>
            <person name="Taconnat L."/>
            <person name="Small I."/>
        </authorList>
    </citation>
    <scope>GENE FAMILY</scope>
</reference>
<evidence type="ECO:0000305" key="1"/>
<keyword id="KW-1185">Reference proteome</keyword>
<keyword id="KW-0677">Repeat</keyword>
<feature type="chain" id="PRO_0000356057" description="Pentatricopeptide repeat-containing protein At2g41080">
    <location>
        <begin position="1"/>
        <end position="650"/>
    </location>
</feature>
<feature type="repeat" description="PPR 1">
    <location>
        <begin position="43"/>
        <end position="77"/>
    </location>
</feature>
<feature type="repeat" description="PPR 2">
    <location>
        <begin position="78"/>
        <end position="112"/>
    </location>
</feature>
<feature type="repeat" description="PPR 3">
    <location>
        <begin position="114"/>
        <end position="139"/>
    </location>
</feature>
<feature type="repeat" description="PPR 4">
    <location>
        <begin position="140"/>
        <end position="174"/>
    </location>
</feature>
<feature type="repeat" description="PPR 5">
    <location>
        <begin position="175"/>
        <end position="209"/>
    </location>
</feature>
<feature type="repeat" description="PPR 6">
    <location>
        <begin position="210"/>
        <end position="240"/>
    </location>
</feature>
<feature type="repeat" description="PPR 7">
    <location>
        <begin position="241"/>
        <end position="275"/>
    </location>
</feature>
<feature type="repeat" description="PPR 8">
    <location>
        <begin position="276"/>
        <end position="310"/>
    </location>
</feature>
<feature type="repeat" description="PPR 9">
    <location>
        <begin position="311"/>
        <end position="341"/>
    </location>
</feature>
<feature type="repeat" description="PPR 10">
    <location>
        <begin position="342"/>
        <end position="372"/>
    </location>
</feature>
<feature type="repeat" description="PPR 11">
    <location>
        <begin position="378"/>
        <end position="413"/>
    </location>
</feature>
<feature type="repeat" description="PPR 12">
    <location>
        <begin position="414"/>
        <end position="444"/>
    </location>
</feature>
<feature type="region of interest" description="Type E motif">
    <location>
        <begin position="449"/>
        <end position="524"/>
    </location>
</feature>
<feature type="region of interest" description="Type E(+) motif">
    <location>
        <begin position="525"/>
        <end position="555"/>
    </location>
</feature>
<feature type="region of interest" description="Type DYW motif">
    <location>
        <begin position="556"/>
        <end position="650"/>
    </location>
</feature>
<organism>
    <name type="scientific">Arabidopsis thaliana</name>
    <name type="common">Mouse-ear cress</name>
    <dbReference type="NCBI Taxonomy" id="3702"/>
    <lineage>
        <taxon>Eukaryota</taxon>
        <taxon>Viridiplantae</taxon>
        <taxon>Streptophyta</taxon>
        <taxon>Embryophyta</taxon>
        <taxon>Tracheophyta</taxon>
        <taxon>Spermatophyta</taxon>
        <taxon>Magnoliopsida</taxon>
        <taxon>eudicotyledons</taxon>
        <taxon>Gunneridae</taxon>
        <taxon>Pentapetalae</taxon>
        <taxon>rosids</taxon>
        <taxon>malvids</taxon>
        <taxon>Brassicales</taxon>
        <taxon>Brassicaceae</taxon>
        <taxon>Camelineae</taxon>
        <taxon>Arabidopsis</taxon>
    </lineage>
</organism>
<proteinExistence type="evidence at transcript level"/>